<evidence type="ECO:0000255" key="1">
    <source>
        <dbReference type="HAMAP-Rule" id="MF_00945"/>
    </source>
</evidence>
<organism>
    <name type="scientific">Helicobacter pylori (strain J99 / ATCC 700824)</name>
    <name type="common">Campylobacter pylori J99</name>
    <dbReference type="NCBI Taxonomy" id="85963"/>
    <lineage>
        <taxon>Bacteria</taxon>
        <taxon>Pseudomonadati</taxon>
        <taxon>Campylobacterota</taxon>
        <taxon>Epsilonproteobacteria</taxon>
        <taxon>Campylobacterales</taxon>
        <taxon>Helicobacteraceae</taxon>
        <taxon>Helicobacter</taxon>
    </lineage>
</organism>
<dbReference type="EMBL" id="AE001439">
    <property type="protein sequence ID" value="AAD06980.1"/>
    <property type="molecule type" value="Genomic_DNA"/>
</dbReference>
<dbReference type="PIR" id="G71811">
    <property type="entry name" value="G71811"/>
</dbReference>
<dbReference type="RefSeq" id="WP_000411633.1">
    <property type="nucleotide sequence ID" value="NC_000921.1"/>
</dbReference>
<dbReference type="SMR" id="Q9ZJA6"/>
<dbReference type="KEGG" id="hpj:jhp_1407"/>
<dbReference type="PATRIC" id="fig|85963.30.peg.1142"/>
<dbReference type="eggNOG" id="COG0195">
    <property type="taxonomic scope" value="Bacteria"/>
</dbReference>
<dbReference type="Proteomes" id="UP000000804">
    <property type="component" value="Chromosome"/>
</dbReference>
<dbReference type="GO" id="GO:0005829">
    <property type="term" value="C:cytosol"/>
    <property type="evidence" value="ECO:0007669"/>
    <property type="project" value="TreeGrafter"/>
</dbReference>
<dbReference type="GO" id="GO:0003700">
    <property type="term" value="F:DNA-binding transcription factor activity"/>
    <property type="evidence" value="ECO:0007669"/>
    <property type="project" value="InterPro"/>
</dbReference>
<dbReference type="GO" id="GO:0003723">
    <property type="term" value="F:RNA binding"/>
    <property type="evidence" value="ECO:0007669"/>
    <property type="project" value="UniProtKB-UniRule"/>
</dbReference>
<dbReference type="GO" id="GO:0006353">
    <property type="term" value="P:DNA-templated transcription termination"/>
    <property type="evidence" value="ECO:0007669"/>
    <property type="project" value="UniProtKB-UniRule"/>
</dbReference>
<dbReference type="GO" id="GO:0031564">
    <property type="term" value="P:transcription antitermination"/>
    <property type="evidence" value="ECO:0007669"/>
    <property type="project" value="UniProtKB-UniRule"/>
</dbReference>
<dbReference type="CDD" id="cd02134">
    <property type="entry name" value="KH-II_NusA_rpt1"/>
    <property type="match status" value="1"/>
</dbReference>
<dbReference type="CDD" id="cd22529">
    <property type="entry name" value="KH-II_NusA_rpt2"/>
    <property type="match status" value="1"/>
</dbReference>
<dbReference type="FunFam" id="3.30.300.20:FF:000002">
    <property type="entry name" value="Transcription termination/antitermination protein NusA"/>
    <property type="match status" value="1"/>
</dbReference>
<dbReference type="Gene3D" id="3.30.300.20">
    <property type="match status" value="2"/>
</dbReference>
<dbReference type="Gene3D" id="2.40.50.140">
    <property type="entry name" value="Nucleic acid-binding proteins"/>
    <property type="match status" value="1"/>
</dbReference>
<dbReference type="Gene3D" id="3.30.1480.10">
    <property type="entry name" value="NusA, N-terminal domain"/>
    <property type="match status" value="1"/>
</dbReference>
<dbReference type="HAMAP" id="MF_00945_B">
    <property type="entry name" value="NusA_B"/>
    <property type="match status" value="1"/>
</dbReference>
<dbReference type="InterPro" id="IPR015946">
    <property type="entry name" value="KH_dom-like_a/b"/>
</dbReference>
<dbReference type="InterPro" id="IPR025249">
    <property type="entry name" value="KH_dom_NusA-like"/>
</dbReference>
<dbReference type="InterPro" id="IPR009019">
    <property type="entry name" value="KH_sf_prok-type"/>
</dbReference>
<dbReference type="InterPro" id="IPR012340">
    <property type="entry name" value="NA-bd_OB-fold"/>
</dbReference>
<dbReference type="InterPro" id="IPR030842">
    <property type="entry name" value="NusA_bac"/>
</dbReference>
<dbReference type="InterPro" id="IPR036555">
    <property type="entry name" value="NusA_N_sf"/>
</dbReference>
<dbReference type="InterPro" id="IPR003029">
    <property type="entry name" value="S1_domain"/>
</dbReference>
<dbReference type="InterPro" id="IPR013735">
    <property type="entry name" value="TF_NusA_N"/>
</dbReference>
<dbReference type="InterPro" id="IPR010213">
    <property type="entry name" value="Tscrpt_termination_fac_NusA"/>
</dbReference>
<dbReference type="NCBIfam" id="TIGR01953">
    <property type="entry name" value="NusA"/>
    <property type="match status" value="1"/>
</dbReference>
<dbReference type="PANTHER" id="PTHR22648">
    <property type="entry name" value="TRANSCRIPTION TERMINATION FACTOR NUSA"/>
    <property type="match status" value="1"/>
</dbReference>
<dbReference type="PANTHER" id="PTHR22648:SF0">
    <property type="entry name" value="TRANSCRIPTION TERMINATION_ANTITERMINATION PROTEIN NUSA"/>
    <property type="match status" value="1"/>
</dbReference>
<dbReference type="Pfam" id="PF13184">
    <property type="entry name" value="KH_5"/>
    <property type="match status" value="1"/>
</dbReference>
<dbReference type="Pfam" id="PF23095">
    <property type="entry name" value="KH_NusA_C"/>
    <property type="match status" value="1"/>
</dbReference>
<dbReference type="Pfam" id="PF08529">
    <property type="entry name" value="NusA_N"/>
    <property type="match status" value="1"/>
</dbReference>
<dbReference type="SMART" id="SM00316">
    <property type="entry name" value="S1"/>
    <property type="match status" value="1"/>
</dbReference>
<dbReference type="SUPFAM" id="SSF50249">
    <property type="entry name" value="Nucleic acid-binding proteins"/>
    <property type="match status" value="1"/>
</dbReference>
<dbReference type="SUPFAM" id="SSF54814">
    <property type="entry name" value="Prokaryotic type KH domain (KH-domain type II)"/>
    <property type="match status" value="1"/>
</dbReference>
<dbReference type="SUPFAM" id="SSF69705">
    <property type="entry name" value="Transcription factor NusA, N-terminal domain"/>
    <property type="match status" value="1"/>
</dbReference>
<dbReference type="PROSITE" id="PS50126">
    <property type="entry name" value="S1"/>
    <property type="match status" value="1"/>
</dbReference>
<keyword id="KW-0963">Cytoplasm</keyword>
<keyword id="KW-0677">Repeat</keyword>
<keyword id="KW-0694">RNA-binding</keyword>
<keyword id="KW-0804">Transcription</keyword>
<keyword id="KW-0889">Transcription antitermination</keyword>
<keyword id="KW-0805">Transcription regulation</keyword>
<keyword id="KW-0806">Transcription termination</keyword>
<name>NUSA_HELPJ</name>
<protein>
    <recommendedName>
        <fullName evidence="1">Transcription termination/antitermination protein NusA</fullName>
    </recommendedName>
</protein>
<sequence>MEKISDLIECIAYEKNLPKEMISKVIQGCLLKMAQNELDPLARYLVVEENKQLQLIQLVEVLEDDDERLVNDPSKYISLSKAKEMDPSVKIKDELSYSLSLESMKQGAINRLFKDLQYQLEKALEDSHFEAFQKRLNSVLMGQVILVDHNQNTFIEIEQQFQGVLSMRHRIKGESFKIGDSIKAVLTQVKRTKKGLLLELSRTTPKMLEALLELEVPEIKDKEIEIIHCARIPGNRAKVSFFSHNSRIDPIGAAVGVKGVRINAISNELNKENIDCIEYSNVPEIYITLALAPAKILSVEIKKIPIEELSAEEKESIQERFIVNNHLQKAKVRLLDIEKSKAIGKGGVNVCLASMLTGYHIEFETIPSVKENAENENEKETPKVGVEALESLFKN</sequence>
<gene>
    <name evidence="1" type="primary">nusA</name>
    <name type="ordered locus">jhp_1407</name>
</gene>
<reference key="1">
    <citation type="journal article" date="1999" name="Nature">
        <title>Genomic sequence comparison of two unrelated isolates of the human gastric pathogen Helicobacter pylori.</title>
        <authorList>
            <person name="Alm R.A."/>
            <person name="Ling L.-S.L."/>
            <person name="Moir D.T."/>
            <person name="King B.L."/>
            <person name="Brown E.D."/>
            <person name="Doig P.C."/>
            <person name="Smith D.R."/>
            <person name="Noonan B."/>
            <person name="Guild B.C."/>
            <person name="deJonge B.L."/>
            <person name="Carmel G."/>
            <person name="Tummino P.J."/>
            <person name="Caruso A."/>
            <person name="Uria-Nickelsen M."/>
            <person name="Mills D.M."/>
            <person name="Ives C."/>
            <person name="Gibson R."/>
            <person name="Merberg D."/>
            <person name="Mills S.D."/>
            <person name="Jiang Q."/>
            <person name="Taylor D.E."/>
            <person name="Vovis G.F."/>
            <person name="Trust T.J."/>
        </authorList>
    </citation>
    <scope>NUCLEOTIDE SEQUENCE [LARGE SCALE GENOMIC DNA]</scope>
    <source>
        <strain>J99 / ATCC 700824</strain>
    </source>
</reference>
<accession>Q9ZJA6</accession>
<comment type="function">
    <text evidence="1">Participates in both transcription termination and antitermination.</text>
</comment>
<comment type="subunit">
    <text evidence="1">Monomer. Binds directly to the core enzyme of the DNA-dependent RNA polymerase and to nascent RNA.</text>
</comment>
<comment type="subcellular location">
    <subcellularLocation>
        <location evidence="1">Cytoplasm</location>
    </subcellularLocation>
</comment>
<comment type="similarity">
    <text evidence="1">Belongs to the NusA family.</text>
</comment>
<proteinExistence type="inferred from homology"/>
<feature type="chain" id="PRO_0000181970" description="Transcription termination/antitermination protein NusA">
    <location>
        <begin position="1"/>
        <end position="395"/>
    </location>
</feature>
<feature type="domain" description="S1 motif" evidence="1">
    <location>
        <begin position="137"/>
        <end position="201"/>
    </location>
</feature>
<feature type="domain" description="KH 1" evidence="1">
    <location>
        <begin position="243"/>
        <end position="291"/>
    </location>
</feature>
<feature type="domain" description="KH 2" evidence="1">
    <location>
        <begin position="331"/>
        <end position="378"/>
    </location>
</feature>